<keyword id="KW-0010">Activator</keyword>
<keyword id="KW-0025">Alternative splicing</keyword>
<keyword id="KW-0090">Biological rhythms</keyword>
<keyword id="KW-0963">Cytoplasm</keyword>
<keyword id="KW-0903">Direct protein sequencing</keyword>
<keyword id="KW-0238">DNA-binding</keyword>
<keyword id="KW-0325">Glycoprotein</keyword>
<keyword id="KW-1017">Isopeptide bond</keyword>
<keyword id="KW-0479">Metal-binding</keyword>
<keyword id="KW-0539">Nucleus</keyword>
<keyword id="KW-0597">Phosphoprotein</keyword>
<keyword id="KW-0675">Receptor</keyword>
<keyword id="KW-1185">Reference proteome</keyword>
<keyword id="KW-0804">Transcription</keyword>
<keyword id="KW-0805">Transcription regulation</keyword>
<keyword id="KW-0832">Ubl conjugation</keyword>
<keyword id="KW-0862">Zinc</keyword>
<keyword id="KW-0863">Zinc-finger</keyword>
<accession>P37238</accession>
<gene>
    <name type="primary">Pparg</name>
    <name type="synonym">Nr1c3</name>
</gene>
<feature type="chain" id="PRO_0000053494" description="Peroxisome proliferator-activated receptor gamma">
    <location>
        <begin position="1"/>
        <end position="505"/>
    </location>
</feature>
<feature type="domain" description="NR LBD" evidence="4">
    <location>
        <begin position="238"/>
        <end position="503"/>
    </location>
</feature>
<feature type="DNA-binding region" description="Nuclear receptor" evidence="3">
    <location>
        <begin position="136"/>
        <end position="210"/>
    </location>
</feature>
<feature type="zinc finger region" description="NR C4-type" evidence="3">
    <location>
        <begin position="139"/>
        <end position="159"/>
    </location>
</feature>
<feature type="zinc finger region" description="NR C4-type" evidence="3">
    <location>
        <begin position="176"/>
        <end position="198"/>
    </location>
</feature>
<feature type="region of interest" description="Interaction with FAM120B" evidence="7">
    <location>
        <begin position="205"/>
        <end position="280"/>
    </location>
</feature>
<feature type="short sequence motif" description="9aaTAD" evidence="2">
    <location>
        <begin position="495"/>
        <end position="503"/>
    </location>
</feature>
<feature type="modified residue" description="Phosphoserine; by MAPK" evidence="13 14">
    <location>
        <position position="112"/>
    </location>
</feature>
<feature type="glycosylation site" description="O-linked (GlcNAc) threonine" evidence="15">
    <location>
        <position position="84"/>
    </location>
</feature>
<feature type="cross-link" description="Glycyl lysine isopeptide (Lys-Gly) (interchain with G-Cter in ubiquitin)" evidence="2">
    <location>
        <position position="252"/>
    </location>
</feature>
<feature type="splice variant" id="VSP_003647" description="In isoform 1." evidence="24 25 26">
    <location>
        <begin position="1"/>
        <end position="30"/>
    </location>
</feature>
<feature type="mutagenesis site" description="Increases basal and ligand-induced adipogenic activity. Abolishes repression by PER2 on transactivation activity. No loss of ubiquitination by FBXO9." evidence="13 14 18">
    <original>S</original>
    <variation>A</variation>
    <location>
        <position position="112"/>
    </location>
</feature>
<feature type="mutagenesis site" description="No effect on repression by PER2 on transactivation activity." evidence="13 14">
    <original>S</original>
    <variation>D</variation>
    <location>
        <position position="112"/>
    </location>
</feature>
<feature type="mutagenesis site" description="No loss of ubiquitination by FBXO9." evidence="18">
    <original>S</original>
    <variation>A</variation>
    <location>
        <position position="273"/>
    </location>
</feature>
<feature type="sequence conflict" description="In Ref. 2; AAA62110." evidence="27" ref="2">
    <original>MP</original>
    <variation>DR</variation>
    <location>
        <begin position="213"/>
        <end position="214"/>
    </location>
</feature>
<feature type="sequence conflict" description="In Ref. 2; AAA62110." evidence="27" ref="2">
    <original>NSL</original>
    <variation>SSF</variation>
    <location>
        <begin position="281"/>
        <end position="283"/>
    </location>
</feature>
<feature type="sequence conflict" description="In Ref. 2; AAA62110 and 4; AAA19971." evidence="27" ref="2 4">
    <original>N</original>
    <variation>S</variation>
    <location>
        <position position="383"/>
    </location>
</feature>
<feature type="sequence conflict" description="In Ref. 2; AAA62110." evidence="27" ref="2">
    <original>L</original>
    <variation>F</variation>
    <location>
        <position position="497"/>
    </location>
</feature>
<organism>
    <name type="scientific">Mus musculus</name>
    <name type="common">Mouse</name>
    <dbReference type="NCBI Taxonomy" id="10090"/>
    <lineage>
        <taxon>Eukaryota</taxon>
        <taxon>Metazoa</taxon>
        <taxon>Chordata</taxon>
        <taxon>Craniata</taxon>
        <taxon>Vertebrata</taxon>
        <taxon>Euteleostomi</taxon>
        <taxon>Mammalia</taxon>
        <taxon>Eutheria</taxon>
        <taxon>Euarchontoglires</taxon>
        <taxon>Glires</taxon>
        <taxon>Rodentia</taxon>
        <taxon>Myomorpha</taxon>
        <taxon>Muroidea</taxon>
        <taxon>Muridae</taxon>
        <taxon>Murinae</taxon>
        <taxon>Mus</taxon>
        <taxon>Mus</taxon>
    </lineage>
</organism>
<proteinExistence type="evidence at protein level"/>
<name>PPARG_MOUSE</name>
<comment type="function">
    <text evidence="8 10 13 14 16 18">Nuclear receptor that binds peroxisome proliferators such as hypolipidemic drugs and fatty acids. Once activated by a ligand, the nuclear receptor binds to DNA specific PPAR response elements (PPRE) and modulates the transcription of its target genes, such as acyl-CoA oxidase. It therefore controls the peroxisomal beta-oxidation pathway of fatty acids. Key regulator of adipocyte differentiation and glucose homeostasis. ARF6 acts as a key regulator of the tissue-specific adipocyte P2 (aP2) enhancer. Acts as a critical regulator of gut homeostasis by suppressing NF-kappa-B-mediated pro-inflammatory responses. Plays a role in the regulation of cardiovascular circadian rhythms by regulating the transcription of BMAL1 in the blood vessels (PubMed:19041764).</text>
</comment>
<comment type="activity regulation">
    <text evidence="2">PDPK1 activates its transcriptional activity independently of its kinase activity.</text>
</comment>
<comment type="subunit">
    <text evidence="2 5 6 7 8 9 11 12 13 14 16 17 19 20 21 22 23">Heterodimer with other nuclear receptors, such as RXRA. The heterodimer with the retinoic acid receptor RXRA is called adipocyte-specific transcription factor ARF6. Interacts with NCOA6 coactivator, leading to a strong increase in transcription of target genes. Interacts with coactivator PPARBP, leading to a mild increase in transcription of target genes. Interacts with NOCA7 in a ligand-inducible manner. Interacts with NCOA1 and NCOA2 LXXLL motifs. Interacts with ASXL1, ASXL2, DNTTIP2, FAM120B, MAP2K1/MEK1, NR0B2, PDPK1, PRDM16, PRMT2 and TGFB1I1. Interacts (when activated by agonist) with PPP5C. Interacts with HELZ2 and THRAP3; the interaction stimulates the transcriptional activity of PPARG. Interacts with PER2, the interaction is ligand dependent and blocks PPARG recruitment to target promoters. Interacts with NOCT. Interacts with FOXO1 (acetylated form). Interacts with ACTN4 (By similarity). Interacts (when in the liganded conformation) with GPS2 (PubMed:25519902). Interacts with CRY1 and CRY2 in a ligand-dependent manner (PubMed:28683290). In the absence of hormonal ligand, interacts with TACC1 (PubMed:20078863). In macrophages, interacts with PAQR3 and STUB1; the interactions promote PPARG poylubiquitination and STUB1-mediated degradation (PubMed:35710596).</text>
</comment>
<comment type="interaction">
    <interactant intactId="EBI-5260705">
        <id>P37238</id>
    </interactant>
    <interactant intactId="EBI-21183505">
        <id>P97431</id>
        <label>Irf6</label>
    </interactant>
    <organismsDiffer>false</organismsDiffer>
    <experiments>2</experiments>
</comment>
<comment type="interaction">
    <interactant intactId="EBI-5260705">
        <id>P37238</id>
    </interactant>
    <interactant intactId="EBI-1802585">
        <id>Q923E4</id>
        <label>Sirt1</label>
    </interactant>
    <organismsDiffer>false</organismsDiffer>
    <experiments>2</experiments>
</comment>
<comment type="interaction">
    <interactant intactId="EBI-5260705">
        <id>P37238</id>
    </interactant>
    <interactant intactId="EBI-1802965">
        <id>Q96EB6</id>
        <label>SIRT1</label>
    </interactant>
    <organismsDiffer>true</organismsDiffer>
    <experiments>3</experiments>
</comment>
<comment type="interaction">
    <interactant intactId="EBI-6267861">
        <id>P37238-1</id>
    </interactant>
    <interactant intactId="EBI-1802965">
        <id>Q96EB6</id>
        <label>SIRT1</label>
    </interactant>
    <organismsDiffer>true</organismsDiffer>
    <experiments>2</experiments>
</comment>
<comment type="subcellular location">
    <subcellularLocation>
        <location evidence="3 12 16">Nucleus</location>
    </subcellularLocation>
    <subcellularLocation>
        <location evidence="1">Cytoplasm</location>
    </subcellularLocation>
    <text evidence="1">Redistributed from the nucleus to the cytosol through a MAP2K1/MEK1-dependent manner (By similarity). NOCT enhances its nuclear translocation.</text>
</comment>
<comment type="alternative products">
    <event type="alternative splicing"/>
    <isoform>
        <id>P37238-1</id>
        <name>2</name>
        <sequence type="displayed"/>
    </isoform>
    <isoform>
        <id>P37238-2</id>
        <name>1</name>
        <sequence type="described" ref="VSP_003647"/>
    </isoform>
</comment>
<comment type="tissue specificity">
    <text evidence="13 21">Highest expression in white and brown adipose tissue. Also found in liver, skeletal muscle, heart, adrenal gland, spleen, kidney and intestine. Isoform 2 is more abundant than isoform 1 in adipose tissue.</text>
</comment>
<comment type="developmental stage">
    <text>It appears first at 13.5 dpc and increases until birth.</text>
</comment>
<comment type="induction">
    <text evidence="10">Expressed in a circadian manner in the aorta.</text>
</comment>
<comment type="domain">
    <text evidence="2">The 9aaTAD motif is a transactivation domain present in a large number of yeast and animal transcription factors.</text>
</comment>
<comment type="PTM">
    <text evidence="15">O-GlcNAcylation at Thr-84 reduces transcriptional activity in adipocytes.</text>
</comment>
<comment type="PTM">
    <text evidence="13 14">Phosphorylated in basal conditions and dephosphorylated when treated with the ligand. May be dephosphorylated by PPP5C. The phosphorylated Ser-112 form is recognized by PER2 and repressed, dephosphorylation at Ser-112 induces adipogenic activity. Ser-112 phosphorylation levels are reduced by 65% in brown adipose tissue compared to white adipose tissue.</text>
</comment>
<comment type="PTM">
    <text evidence="18">Ubiquitinated by E3 ubiquitin-protein ligase complex containing FBXO9; leading to proteasomal degradation.</text>
</comment>
<comment type="PTM">
    <text evidence="2 18 20">Ubiquitinated by E3 ubiquitin-protein ligase complex containing FBXO9; leading to proteasomal degradation (PubMed:27197753). Ubiquitinated at Lys-252 by TRIM55 leading to proteasomal degradation (By similarity). Ubiquitinated by E3 ubiquitin-protein ligase STUB1/CHIP; leading to proteasomal degradation (PubMed:35710596).</text>
</comment>
<comment type="disruption phenotype">
    <text evidence="10">Mice develop abnormalities in circadian variations in blood pressure and heart rate, in parallel with a reduction of diurnal variations in the sympathetic nerve activity, and impaired rhythmicity of BMAL1 in the blood vessels.</text>
</comment>
<comment type="similarity">
    <text evidence="27">Belongs to the nuclear hormone receptor family. NR1 subfamily.</text>
</comment>
<reference key="1">
    <citation type="journal article" date="1994" name="Genes Dev.">
        <title>mPPAR gamma 2: tissue-specific regulator of an adipocyte enhancer.</title>
        <authorList>
            <person name="Tontonoz P."/>
            <person name="Hu E."/>
            <person name="Graves R.A."/>
            <person name="Budavari A.I."/>
            <person name="Spiegelman B.M."/>
        </authorList>
    </citation>
    <scope>NUCLEOTIDE SEQUENCE [MRNA] (ISOFORM 2)</scope>
    <scope>SUBUNIT</scope>
    <source>
        <tissue>Adipose tissue</tissue>
    </source>
</reference>
<reference key="2">
    <citation type="journal article" date="1993" name="Biochem. Biophys. Res. Commun.">
        <title>Identification of two mPPAR related receptors and evidence for the existence of five subfamily members.</title>
        <authorList>
            <person name="Chen F."/>
            <person name="Law S.W."/>
            <person name="O'Malley B.W."/>
        </authorList>
    </citation>
    <scope>NUCLEOTIDE SEQUENCE [MRNA] (ISOFORM 1)</scope>
    <source>
        <strain>BALB/cJ</strain>
        <tissue>Heart</tissue>
    </source>
</reference>
<reference key="3">
    <citation type="journal article" date="1993" name="J. Biol. Chem.">
        <title>Cloning of a new member of the peroxisome proliferator-activated receptor gene family from mouse liver.</title>
        <authorList>
            <person name="Zhu Y."/>
            <person name="Alvares K."/>
            <person name="Huang Q."/>
            <person name="Rao M.S."/>
            <person name="Reddy J.K."/>
        </authorList>
    </citation>
    <scope>NUCLEOTIDE SEQUENCE [MRNA] (ISOFORM 1)</scope>
    <source>
        <strain>C57BL/6 X CBA</strain>
        <tissue>Liver</tissue>
    </source>
</reference>
<reference key="4">
    <citation type="journal article" date="1994" name="Proc. Natl. Acad. Sci. U.S.A.">
        <title>Differential expression and activation of a family of murine peroxisome proliferator-activated receptors.</title>
        <authorList>
            <person name="Kliewer S.A."/>
            <person name="Forman B.M."/>
            <person name="Blumberg B."/>
            <person name="Ong E.S."/>
            <person name="Borgmeyer U."/>
            <person name="Mangelsdorf D.J."/>
            <person name="Umesono K."/>
            <person name="Evans R.M."/>
        </authorList>
    </citation>
    <scope>NUCLEOTIDE SEQUENCE [MRNA] (ISOFORM 1)</scope>
    <source>
        <tissue>Liver</tissue>
    </source>
</reference>
<reference key="5">
    <citation type="journal article" date="1996" name="J. Clin. Invest.">
        <title>Regulation of PPAR gamma gene expression by nutrition and obesity in rodents.</title>
        <authorList>
            <person name="Vidal-Puig A."/>
            <person name="Jimenez-Linan M."/>
            <person name="Lowell B.B."/>
            <person name="Hamann A."/>
            <person name="Hu E."/>
            <person name="Spiegelman B."/>
            <person name="Flier J.S."/>
            <person name="Moller D.E."/>
        </authorList>
    </citation>
    <scope>NUCLEOTIDE SEQUENCE [MRNA]</scope>
</reference>
<reference key="6">
    <citation type="journal article" date="1994" name="Nucleic Acids Res.">
        <title>Adipocyte-specific transcription factor ARF6 is a heterodimeric complex of two nuclear hormone receptors, PPAR gamma and RXR alpha.</title>
        <authorList>
            <person name="Tontonoz P."/>
            <person name="Graves R.A."/>
            <person name="Budavari A.I."/>
            <person name="Erdjument-Bromage H."/>
            <person name="Lui M."/>
            <person name="Hu E."/>
            <person name="Tempst P."/>
            <person name="Spiegelman B.M."/>
        </authorList>
    </citation>
    <scope>PROTEIN SEQUENCE OF 66-85 AND 146-160</scope>
    <scope>SUBUNIT</scope>
    <scope>TISSUE SPECIFICITY</scope>
    <source>
        <tissue>Adipose tissue</tissue>
    </source>
</reference>
<reference key="7">
    <citation type="journal article" date="1997" name="J. Biol. Chem.">
        <title>Isolation and characterization of PBP, a protein that interacts with peroxisome proliferator-activated receptor.</title>
        <authorList>
            <person name="Zhu Y."/>
            <person name="Qi C."/>
            <person name="Jain S."/>
            <person name="Rao M.S."/>
            <person name="Reddy J.K."/>
        </authorList>
    </citation>
    <scope>INTERACTION WITH PPARBP</scope>
</reference>
<reference key="8">
    <citation type="journal article" date="2000" name="J. Biol. Chem.">
        <title>Isolation and characterization of peroxisome proliferator-activated receptor (PPAR) interacting protein (PRIP) as a coactivator for PPAR.</title>
        <authorList>
            <person name="Zhu Y.-J."/>
            <person name="Kan L."/>
            <person name="Qi C."/>
            <person name="Kanwar Y.S."/>
            <person name="Yeldandi A.V."/>
            <person name="Rao M.S."/>
            <person name="Reddy J.K."/>
        </authorList>
    </citation>
    <scope>INTERACTION WITH NCOA6</scope>
</reference>
<reference key="9">
    <citation type="journal article" date="2005" name="Genes Dev.">
        <title>Hic-5 regulates an epithelial program mediated by PPARgamma.</title>
        <authorList>
            <person name="Drori S."/>
            <person name="Girnun G.D."/>
            <person name="Tou L."/>
            <person name="Szwaya J.D."/>
            <person name="Mueller E."/>
            <person name="Xia K."/>
            <person name="Shivdasani R.A."/>
            <person name="Spiegelman B.M."/>
        </authorList>
    </citation>
    <scope>INTERACTION WITH TGFB1I1</scope>
</reference>
<reference key="10">
    <citation type="journal article" date="2007" name="Mol. Endocrinol.">
        <title>Constitutive coactivator of peroxisome proliferator-activated receptor (PPARgamma), a novel coactivator of PPARgamma that promotes adipogenesis.</title>
        <authorList>
            <person name="Li D."/>
            <person name="Kang Q."/>
            <person name="Wang D.-M."/>
        </authorList>
    </citation>
    <scope>INTERACTION WITH FAM120B</scope>
</reference>
<reference key="11">
    <citation type="journal article" date="2008" name="Cell Metab.">
        <title>Vascular PPARgamma controls circadian variation in blood pressure and heart rate through Bmal1.</title>
        <authorList>
            <person name="Wang N."/>
            <person name="Yang G."/>
            <person name="Jia Z."/>
            <person name="Zhang H."/>
            <person name="Aoyagi T."/>
            <person name="Soodvilai S."/>
            <person name="Symons J.D."/>
            <person name="Schnermann J.B."/>
            <person name="Gonzalez F.J."/>
            <person name="Litwin S.E."/>
            <person name="Yang T."/>
        </authorList>
    </citation>
    <scope>FUNCTION</scope>
    <scope>DISRUPTION PHENOTYPE</scope>
    <scope>INDUCTION</scope>
</reference>
<reference key="12">
    <citation type="journal article" date="2008" name="Nature">
        <title>PRDM16 controls a brown fat/skeletal muscle switch.</title>
        <authorList>
            <person name="Seale P."/>
            <person name="Bjork B."/>
            <person name="Yang W."/>
            <person name="Kajimura S."/>
            <person name="Chin S."/>
            <person name="Kuang S."/>
            <person name="Scime A."/>
            <person name="Devarakonda S."/>
            <person name="Conroe H.M."/>
            <person name="Erdjument-Bromage H."/>
            <person name="Tempst P."/>
            <person name="Rudnicki M.A."/>
            <person name="Beier D.R."/>
            <person name="Spiegelman B.M."/>
        </authorList>
    </citation>
    <scope>FUNCTION</scope>
    <scope>INTERACTION WITH PRDM16</scope>
</reference>
<reference key="13">
    <citation type="journal article" date="2009" name="Mol. Biol. Cell">
        <title>SIRT2 suppresses adipocyte differentiation by deacetylating FOXO1 and enhancing FOXO1's repressive interaction with PPARgamma.</title>
        <authorList>
            <person name="Wang F."/>
            <person name="Tong Q."/>
        </authorList>
    </citation>
    <scope>INTERACTION WITH FOXO1</scope>
</reference>
<reference key="14">
    <citation type="journal article" date="2010" name="BMC Mol. Biol.">
        <title>The transforming acidic coiled coil (TACC1) protein modulates the transcriptional activity of the nuclear receptors TR and RAR.</title>
        <authorList>
            <person name="Guyot R."/>
            <person name="Vincent S."/>
            <person name="Bertin J."/>
            <person name="Samarut J."/>
            <person name="Ravel-Chapuis P."/>
        </authorList>
    </citation>
    <scope>INTERACTION WITH TACC1</scope>
</reference>
<reference key="15">
    <citation type="journal article" date="2010" name="Cell Metab.">
        <title>PER2 controls lipid metabolism by direct regulation of PPARgamma.</title>
        <authorList>
            <person name="Grimaldi B."/>
            <person name="Bellet M.M."/>
            <person name="Katada S."/>
            <person name="Astarita G."/>
            <person name="Hirayama J."/>
            <person name="Amin R.H."/>
            <person name="Granneman J.G."/>
            <person name="Piomelli D."/>
            <person name="Leff T."/>
            <person name="Sassone-Corsi P."/>
        </authorList>
    </citation>
    <scope>FUNCTION IN ADIPOGENESIS</scope>
    <scope>INTERACTION WITH PER2</scope>
    <scope>PHOSPHORYLATION AT SER-112</scope>
    <scope>MUTAGENESIS OF SER-112</scope>
    <scope>TISSUE SPECIFICITY</scope>
</reference>
<reference key="16">
    <citation type="journal article" date="2010" name="Proc. Natl. Acad. Sci. U.S.A.">
        <title>A circadian-regulated gene, Nocturnin, promotes adipogenesis by stimulating PPAR-gamma nuclear translocation.</title>
        <authorList>
            <person name="Kawai M."/>
            <person name="Green C.B."/>
            <person name="Lecka-Czernik B."/>
            <person name="Douris N."/>
            <person name="Gilbert M.R."/>
            <person name="Kojima S."/>
            <person name="Ackert-Bicknell C."/>
            <person name="Garg N."/>
            <person name="Horowitz M.C."/>
            <person name="Adamo M.L."/>
            <person name="Clemmons D.R."/>
            <person name="Rosen C.J."/>
        </authorList>
    </citation>
    <scope>SUBCELLULAR LOCATION</scope>
    <scope>INTERACTION WITH NOCT</scope>
</reference>
<reference key="17">
    <citation type="journal article" date="2011" name="J. Biol. Chem.">
        <title>Protein phosphatase 5 mediates lipid metabolism through reciprocal control of glucocorticoid receptor and peroxisome proliferator-activated receptor-? (PPAR?).</title>
        <authorList>
            <person name="Hinds T.D. Jr."/>
            <person name="Stechschulte L.A."/>
            <person name="Cash H.A."/>
            <person name="Whisler D."/>
            <person name="Banerjee A."/>
            <person name="Yong W."/>
            <person name="Khuder S.S."/>
            <person name="Kaw M.K."/>
            <person name="Shou W."/>
            <person name="Najjar S.M."/>
            <person name="Sanchez E.R."/>
        </authorList>
    </citation>
    <scope>FUNCTION IN ADIPOGENESIS</scope>
    <scope>INTERACTION WITH PPP5C</scope>
    <scope>PHOSPHORYLATION AT SER-112</scope>
    <scope>DEPHOSPHORYLATION AT SER-112</scope>
    <scope>MUTAGENESIS OF SER-112</scope>
</reference>
<reference key="18">
    <citation type="journal article" date="2012" name="Biochem. Biophys. Res. Commun.">
        <title>O-GlcNAc modification of PPARgamma reduces its transcriptional activity.</title>
        <authorList>
            <person name="Ji S."/>
            <person name="Park S.Y."/>
            <person name="Roth J."/>
            <person name="Kim H.S."/>
            <person name="Cho J.W."/>
        </authorList>
    </citation>
    <scope>GLYCOSYLATION AT THR-84</scope>
</reference>
<reference key="19">
    <citation type="journal article" date="2013" name="Mol. Endocrinol.">
        <title>THRAP3 interacts with HELZ2 and plays a novel role in adipocyte differentiation.</title>
        <authorList>
            <person name="Katano-Toki A."/>
            <person name="Satoh T."/>
            <person name="Tomaru T."/>
            <person name="Yoshino S."/>
            <person name="Ishizuka T."/>
            <person name="Ishii S."/>
            <person name="Ozawa A."/>
            <person name="Shibusawa N."/>
            <person name="Tsuchiya T."/>
            <person name="Saito T."/>
            <person name="Shimizu H."/>
            <person name="Hashimoto K."/>
            <person name="Okada S."/>
            <person name="Yamada M."/>
            <person name="Mori M."/>
        </authorList>
    </citation>
    <scope>FUNCTION</scope>
    <scope>INTERACTION WITH HELZ2 AND THRAP3</scope>
    <scope>SUBCELLULAR LOCATION</scope>
</reference>
<reference key="20">
    <citation type="journal article" date="2015" name="J. Biol. Chem.">
        <title>The optimal corepressor function of nuclear receptor corepressor (NCoR) for peroxisome proliferator-activated receptor gamma requires G protein pathway suppressor 2.</title>
        <authorList>
            <person name="Guo C."/>
            <person name="Li Y."/>
            <person name="Gow C.H."/>
            <person name="Wong M."/>
            <person name="Zha J."/>
            <person name="Yan C."/>
            <person name="Liu H."/>
            <person name="Wang Y."/>
            <person name="Burris T.P."/>
            <person name="Zhang J."/>
        </authorList>
    </citation>
    <scope>INTERACTION WITH GPS2</scope>
</reference>
<reference key="21">
    <citation type="journal article" date="2016" name="Exp. Mol. Med.">
        <title>F-box only protein 9 is an E3 ubiquitin ligase of PPARgamma.</title>
        <authorList>
            <person name="Lee K.W."/>
            <person name="Kwak S.H."/>
            <person name="Koo Y.D."/>
            <person name="Cho Y.K."/>
            <person name="Lee H.M."/>
            <person name="Jung H.S."/>
            <person name="Cho Y.M."/>
            <person name="Park Y.J."/>
            <person name="Chung S.S."/>
            <person name="Park K.S."/>
        </authorList>
    </citation>
    <scope>FUNCTION</scope>
    <scope>MUTAGENESIS OF SER-112 AND SER-273</scope>
    <scope>UBIQUITINATION</scope>
</reference>
<reference key="22">
    <citation type="journal article" date="2017" name="Cell Metab.">
        <title>CRY1/2 selectively repress PPARdelta and limit exercise capacity.</title>
        <authorList>
            <person name="Jordan S.D."/>
            <person name="Kriebs A."/>
            <person name="Vaughan M."/>
            <person name="Duglan D."/>
            <person name="Fan W."/>
            <person name="Henriksson E."/>
            <person name="Huber A.L."/>
            <person name="Papp S.J."/>
            <person name="Nguyen M."/>
            <person name="Afetian M."/>
            <person name="Downes M."/>
            <person name="Yu R.T."/>
            <person name="Kralli A."/>
            <person name="Evans R.M."/>
            <person name="Lamia K.A."/>
        </authorList>
    </citation>
    <scope>INTERACTION WITH CRY1 AND CRY2</scope>
</reference>
<reference key="23">
    <citation type="journal article" date="2022" name="Lab. Invest.">
        <title>PAQR3 depletion accelerates diabetic wound healing by promoting angiogenesis through inhibiting STUB1-mediated PPARgamma degradation.</title>
        <authorList>
            <person name="Qiu J."/>
            <person name="Shu C."/>
            <person name="Li X."/>
            <person name="Zhang W.C."/>
        </authorList>
    </citation>
    <scope>INTERACTION WITH PAQR3 AND STUB1</scope>
    <scope>UBIQUITINATION</scope>
</reference>
<evidence type="ECO:0000250" key="1"/>
<evidence type="ECO:0000250" key="2">
    <source>
        <dbReference type="UniProtKB" id="P37231"/>
    </source>
</evidence>
<evidence type="ECO:0000255" key="3">
    <source>
        <dbReference type="PROSITE-ProRule" id="PRU00407"/>
    </source>
</evidence>
<evidence type="ECO:0000255" key="4">
    <source>
        <dbReference type="PROSITE-ProRule" id="PRU01189"/>
    </source>
</evidence>
<evidence type="ECO:0000269" key="5">
    <source>
    </source>
</evidence>
<evidence type="ECO:0000269" key="6">
    <source>
    </source>
</evidence>
<evidence type="ECO:0000269" key="7">
    <source>
    </source>
</evidence>
<evidence type="ECO:0000269" key="8">
    <source>
    </source>
</evidence>
<evidence type="ECO:0000269" key="9">
    <source>
    </source>
</evidence>
<evidence type="ECO:0000269" key="10">
    <source>
    </source>
</evidence>
<evidence type="ECO:0000269" key="11">
    <source>
    </source>
</evidence>
<evidence type="ECO:0000269" key="12">
    <source>
    </source>
</evidence>
<evidence type="ECO:0000269" key="13">
    <source>
    </source>
</evidence>
<evidence type="ECO:0000269" key="14">
    <source>
    </source>
</evidence>
<evidence type="ECO:0000269" key="15">
    <source>
    </source>
</evidence>
<evidence type="ECO:0000269" key="16">
    <source>
    </source>
</evidence>
<evidence type="ECO:0000269" key="17">
    <source>
    </source>
</evidence>
<evidence type="ECO:0000269" key="18">
    <source>
    </source>
</evidence>
<evidence type="ECO:0000269" key="19">
    <source>
    </source>
</evidence>
<evidence type="ECO:0000269" key="20">
    <source>
    </source>
</evidence>
<evidence type="ECO:0000269" key="21">
    <source>
    </source>
</evidence>
<evidence type="ECO:0000269" key="22">
    <source>
    </source>
</evidence>
<evidence type="ECO:0000269" key="23">
    <source>
    </source>
</evidence>
<evidence type="ECO:0000303" key="24">
    <source>
    </source>
</evidence>
<evidence type="ECO:0000303" key="25">
    <source>
    </source>
</evidence>
<evidence type="ECO:0000303" key="26">
    <source>
    </source>
</evidence>
<evidence type="ECO:0000305" key="27"/>
<sequence>MGETLGDSPVDPEHGAFADALPMSTSQEITMVDTEMPFWPTNFGISSVDLSVMEDHSHSFDIKPFTTVDFSSISAPHYEDIPFTRADPMVADYKYDLKLQEYQSAIKVEPASPPYYSEKTQLYNRPHEEPSNSLMAIECRVCGDKASGFHYGVHACEGCKGFFRRTIRLKLIYDRCDLNCRIHKKSRNKCQYCRFQKCLAVGMSHNAIRFGRMPQAEKEKLLAEISSDIDQLNPESADLRALAKHLYDSYIKSFPLTKAKARAILTGKTTDKSPFVIYDMNSLMMGEDKIKFKHITPLQEQSKEVAIRIFQGCQFRSVEAVQEITEYAKNIPGFINLDLNDQVTLLKYGVHEIIYTMLASLMNKDGVLISEGQGFMTREFLKNLRKPFGDFMEPKFEFAVKFNALELDDSDLAIFIAVIILSGDRPGLLNVKPIEDIQDNLLQALELQLKLNHPESSQLFAKVLQKMTDLRQIVTEHVQLLHVIKKTETDMSLHPLLQEIYKDLY</sequence>
<protein>
    <recommendedName>
        <fullName>Peroxisome proliferator-activated receptor gamma</fullName>
        <shortName>PPAR-gamma</shortName>
    </recommendedName>
    <alternativeName>
        <fullName>Nuclear receptor subfamily 1 group C member 3</fullName>
    </alternativeName>
</protein>
<dbReference type="EMBL" id="U09138">
    <property type="protein sequence ID" value="AAA62277.1"/>
    <property type="molecule type" value="mRNA"/>
</dbReference>
<dbReference type="EMBL" id="U01664">
    <property type="protein sequence ID" value="AAA62110.1"/>
    <property type="molecule type" value="mRNA"/>
</dbReference>
<dbReference type="EMBL" id="U01841">
    <property type="protein sequence ID" value="AAC52134.1"/>
    <property type="molecule type" value="mRNA"/>
</dbReference>
<dbReference type="EMBL" id="U10374">
    <property type="protein sequence ID" value="AAA19971.1"/>
    <property type="molecule type" value="mRNA"/>
</dbReference>
<dbReference type="CCDS" id="CCDS20439.1">
    <molecule id="P37238-1"/>
</dbReference>
<dbReference type="CCDS" id="CCDS51876.1">
    <molecule id="P37238-2"/>
</dbReference>
<dbReference type="PIR" id="A54101">
    <property type="entry name" value="A54101"/>
</dbReference>
<dbReference type="RefSeq" id="NP_001120802.1">
    <property type="nucleotide sequence ID" value="NM_001127330.2"/>
</dbReference>
<dbReference type="RefSeq" id="NP_001295281.1">
    <property type="nucleotide sequence ID" value="NM_001308352.1"/>
</dbReference>
<dbReference type="RefSeq" id="NP_001295283.1">
    <property type="nucleotide sequence ID" value="NM_001308354.1"/>
</dbReference>
<dbReference type="RefSeq" id="NP_035276.2">
    <property type="nucleotide sequence ID" value="NM_011146.3"/>
</dbReference>
<dbReference type="RefSeq" id="XP_006505806.1">
    <property type="nucleotide sequence ID" value="XM_006505743.3"/>
</dbReference>
<dbReference type="RefSeq" id="XP_011239554.1">
    <property type="nucleotide sequence ID" value="XM_011241252.1"/>
</dbReference>
<dbReference type="RefSeq" id="XP_017176944.1">
    <property type="nucleotide sequence ID" value="XM_017321455.1"/>
</dbReference>
<dbReference type="SMR" id="P37238"/>
<dbReference type="BioGRID" id="202320">
    <property type="interactions" value="85"/>
</dbReference>
<dbReference type="ComplexPortal" id="CPX-703">
    <property type="entry name" value="PPARgamma-NCOA2 activated nuclear receptor complex"/>
</dbReference>
<dbReference type="ComplexPortal" id="CPX-864">
    <property type="entry name" value="PPARgamma-NCOA1 activated nuclear receptor complex"/>
</dbReference>
<dbReference type="CORUM" id="P37238"/>
<dbReference type="DIP" id="DIP-60435N"/>
<dbReference type="ELM" id="P37238"/>
<dbReference type="FunCoup" id="P37238">
    <property type="interactions" value="1934"/>
</dbReference>
<dbReference type="IntAct" id="P37238">
    <property type="interactions" value="8"/>
</dbReference>
<dbReference type="STRING" id="10090.ENSMUSP00000000450"/>
<dbReference type="BindingDB" id="P37238"/>
<dbReference type="ChEMBL" id="CHEMBL2459"/>
<dbReference type="DrugCentral" id="P37238"/>
<dbReference type="SwissLipids" id="SLP:000001625"/>
<dbReference type="GlyCosmos" id="P37238">
    <property type="glycosylation" value="1 site, No reported glycans"/>
</dbReference>
<dbReference type="GlyGen" id="P37238">
    <property type="glycosylation" value="1 site"/>
</dbReference>
<dbReference type="iPTMnet" id="P37238"/>
<dbReference type="PhosphoSitePlus" id="P37238"/>
<dbReference type="PaxDb" id="10090-ENSMUSP00000000450"/>
<dbReference type="ProteomicsDB" id="289874">
    <molecule id="P37238-1"/>
</dbReference>
<dbReference type="ProteomicsDB" id="289875">
    <molecule id="P37238-2"/>
</dbReference>
<dbReference type="DNASU" id="19016"/>
<dbReference type="GeneID" id="19016"/>
<dbReference type="KEGG" id="mmu:19016"/>
<dbReference type="AGR" id="MGI:97747"/>
<dbReference type="CTD" id="5468"/>
<dbReference type="MGI" id="MGI:97747">
    <property type="gene designation" value="Pparg"/>
</dbReference>
<dbReference type="eggNOG" id="KOG3575">
    <property type="taxonomic scope" value="Eukaryota"/>
</dbReference>
<dbReference type="InParanoid" id="P37238"/>
<dbReference type="OrthoDB" id="7634782at2759"/>
<dbReference type="PhylomeDB" id="P37238"/>
<dbReference type="Reactome" id="R-MMU-381340">
    <property type="pathway name" value="Transcriptional regulation of white adipocyte differentiation"/>
</dbReference>
<dbReference type="Reactome" id="R-MMU-383280">
    <property type="pathway name" value="Nuclear Receptor transcription pathway"/>
</dbReference>
<dbReference type="Reactome" id="R-MMU-9841922">
    <property type="pathway name" value="MLL4 and MLL3 complexes regulate expression of PPARG target genes in adipogenesis and hepatic steatosis"/>
</dbReference>
<dbReference type="BioGRID-ORCS" id="19016">
    <property type="hits" value="2 hits in 78 CRISPR screens"/>
</dbReference>
<dbReference type="ChiTaRS" id="Pparg">
    <property type="organism name" value="mouse"/>
</dbReference>
<dbReference type="PRO" id="PR:P37238"/>
<dbReference type="Proteomes" id="UP000000589">
    <property type="component" value="Unplaced"/>
</dbReference>
<dbReference type="RNAct" id="P37238">
    <property type="molecule type" value="protein"/>
</dbReference>
<dbReference type="GO" id="GO:0005737">
    <property type="term" value="C:cytoplasm"/>
    <property type="evidence" value="ECO:0000314"/>
    <property type="project" value="UniProtKB"/>
</dbReference>
<dbReference type="GO" id="GO:0005829">
    <property type="term" value="C:cytosol"/>
    <property type="evidence" value="ECO:0000314"/>
    <property type="project" value="MGI"/>
</dbReference>
<dbReference type="GO" id="GO:0005654">
    <property type="term" value="C:nucleoplasm"/>
    <property type="evidence" value="ECO:0000304"/>
    <property type="project" value="Reactome"/>
</dbReference>
<dbReference type="GO" id="GO:0005634">
    <property type="term" value="C:nucleus"/>
    <property type="evidence" value="ECO:0000314"/>
    <property type="project" value="UniProtKB"/>
</dbReference>
<dbReference type="GO" id="GO:0090575">
    <property type="term" value="C:RNA polymerase II transcription regulator complex"/>
    <property type="evidence" value="ECO:0000266"/>
    <property type="project" value="ComplexPortal"/>
</dbReference>
<dbReference type="GO" id="GO:0106068">
    <property type="term" value="C:SUMO ligase complex"/>
    <property type="evidence" value="ECO:0000314"/>
    <property type="project" value="MGI"/>
</dbReference>
<dbReference type="GO" id="GO:0050544">
    <property type="term" value="F:arachidonate binding"/>
    <property type="evidence" value="ECO:0000314"/>
    <property type="project" value="BHF-UCL"/>
</dbReference>
<dbReference type="GO" id="GO:0003682">
    <property type="term" value="F:chromatin binding"/>
    <property type="evidence" value="ECO:0000314"/>
    <property type="project" value="UniProtKB"/>
</dbReference>
<dbReference type="GO" id="GO:0003677">
    <property type="term" value="F:DNA binding"/>
    <property type="evidence" value="ECO:0000314"/>
    <property type="project" value="MGI"/>
</dbReference>
<dbReference type="GO" id="GO:0001228">
    <property type="term" value="F:DNA-binding transcription activator activity, RNA polymerase II-specific"/>
    <property type="evidence" value="ECO:0000314"/>
    <property type="project" value="MGI"/>
</dbReference>
<dbReference type="GO" id="GO:0003700">
    <property type="term" value="F:DNA-binding transcription factor activity"/>
    <property type="evidence" value="ECO:0000314"/>
    <property type="project" value="UniProtKB"/>
</dbReference>
<dbReference type="GO" id="GO:0070888">
    <property type="term" value="F:E-box binding"/>
    <property type="evidence" value="ECO:0000314"/>
    <property type="project" value="UniProtKB"/>
</dbReference>
<dbReference type="GO" id="GO:0004879">
    <property type="term" value="F:nuclear receptor activity"/>
    <property type="evidence" value="ECO:0000314"/>
    <property type="project" value="UniProtKB"/>
</dbReference>
<dbReference type="GO" id="GO:1990841">
    <property type="term" value="F:promoter-specific chromatin binding"/>
    <property type="evidence" value="ECO:0000314"/>
    <property type="project" value="MGI"/>
</dbReference>
<dbReference type="GO" id="GO:0000978">
    <property type="term" value="F:RNA polymerase II cis-regulatory region sequence-specific DNA binding"/>
    <property type="evidence" value="ECO:0000314"/>
    <property type="project" value="MGI"/>
</dbReference>
<dbReference type="GO" id="GO:0000979">
    <property type="term" value="F:RNA polymerase II core promoter sequence-specific DNA binding"/>
    <property type="evidence" value="ECO:0000314"/>
    <property type="project" value="MGI"/>
</dbReference>
<dbReference type="GO" id="GO:0000977">
    <property type="term" value="F:RNA polymerase II transcription regulatory region sequence-specific DNA binding"/>
    <property type="evidence" value="ECO:0000314"/>
    <property type="project" value="MGI"/>
</dbReference>
<dbReference type="GO" id="GO:0000976">
    <property type="term" value="F:transcription cis-regulatory region binding"/>
    <property type="evidence" value="ECO:0000314"/>
    <property type="project" value="UniProtKB"/>
</dbReference>
<dbReference type="GO" id="GO:0050699">
    <property type="term" value="F:WW domain binding"/>
    <property type="evidence" value="ECO:0000266"/>
    <property type="project" value="MGI"/>
</dbReference>
<dbReference type="GO" id="GO:0008270">
    <property type="term" value="F:zinc ion binding"/>
    <property type="evidence" value="ECO:0007669"/>
    <property type="project" value="UniProtKB-KW"/>
</dbReference>
<dbReference type="GO" id="GO:0050873">
    <property type="term" value="P:brown fat cell differentiation"/>
    <property type="evidence" value="ECO:0000314"/>
    <property type="project" value="MGI"/>
</dbReference>
<dbReference type="GO" id="GO:0045165">
    <property type="term" value="P:cell fate commitment"/>
    <property type="evidence" value="ECO:0000315"/>
    <property type="project" value="MGI"/>
</dbReference>
<dbReference type="GO" id="GO:0008283">
    <property type="term" value="P:cell population proliferation"/>
    <property type="evidence" value="ECO:0000315"/>
    <property type="project" value="MGI"/>
</dbReference>
<dbReference type="GO" id="GO:0032869">
    <property type="term" value="P:cellular response to insulin stimulus"/>
    <property type="evidence" value="ECO:0000315"/>
    <property type="project" value="MGI"/>
</dbReference>
<dbReference type="GO" id="GO:0071285">
    <property type="term" value="P:cellular response to lithium ion"/>
    <property type="evidence" value="ECO:0000314"/>
    <property type="project" value="MGI"/>
</dbReference>
<dbReference type="GO" id="GO:0036120">
    <property type="term" value="P:cellular response to platelet-derived growth factor stimulus"/>
    <property type="evidence" value="ECO:0000315"/>
    <property type="project" value="BHF-UCL"/>
</dbReference>
<dbReference type="GO" id="GO:0106106">
    <property type="term" value="P:cold-induced thermogenesis"/>
    <property type="evidence" value="ECO:0000315"/>
    <property type="project" value="MGI"/>
</dbReference>
<dbReference type="GO" id="GO:0002024">
    <property type="term" value="P:diet induced thermogenesis"/>
    <property type="evidence" value="ECO:0000315"/>
    <property type="project" value="MGI"/>
</dbReference>
<dbReference type="GO" id="GO:0030855">
    <property type="term" value="P:epithelial cell differentiation"/>
    <property type="evidence" value="ECO:0000316"/>
    <property type="project" value="MGI"/>
</dbReference>
<dbReference type="GO" id="GO:0050673">
    <property type="term" value="P:epithelial cell proliferation"/>
    <property type="evidence" value="ECO:0000315"/>
    <property type="project" value="MGI"/>
</dbReference>
<dbReference type="GO" id="GO:0045444">
    <property type="term" value="P:fat cell differentiation"/>
    <property type="evidence" value="ECO:0000314"/>
    <property type="project" value="MGI"/>
</dbReference>
<dbReference type="GO" id="GO:0006954">
    <property type="term" value="P:inflammatory response"/>
    <property type="evidence" value="ECO:0000304"/>
    <property type="project" value="MGI"/>
</dbReference>
<dbReference type="GO" id="GO:0015909">
    <property type="term" value="P:long-chain fatty acid transport"/>
    <property type="evidence" value="ECO:0000315"/>
    <property type="project" value="MGI"/>
</dbReference>
<dbReference type="GO" id="GO:0042789">
    <property type="term" value="P:mRNA transcription by RNA polymerase II"/>
    <property type="evidence" value="ECO:0000266"/>
    <property type="project" value="ComplexPortal"/>
</dbReference>
<dbReference type="GO" id="GO:1900077">
    <property type="term" value="P:negative regulation of cellular response to insulin stimulus"/>
    <property type="evidence" value="ECO:0000315"/>
    <property type="project" value="BHF-UCL"/>
</dbReference>
<dbReference type="GO" id="GO:0001818">
    <property type="term" value="P:negative regulation of cytokine production"/>
    <property type="evidence" value="ECO:0000315"/>
    <property type="project" value="BHF-UCL"/>
</dbReference>
<dbReference type="GO" id="GO:0045892">
    <property type="term" value="P:negative regulation of DNA-templated transcription"/>
    <property type="evidence" value="ECO:0000314"/>
    <property type="project" value="BHF-UCL"/>
</dbReference>
<dbReference type="GO" id="GO:0050680">
    <property type="term" value="P:negative regulation of epithelial cell proliferation"/>
    <property type="evidence" value="ECO:0000315"/>
    <property type="project" value="MGI"/>
</dbReference>
<dbReference type="GO" id="GO:0010629">
    <property type="term" value="P:negative regulation of gene expression"/>
    <property type="evidence" value="ECO:0000314"/>
    <property type="project" value="BHF-UCL"/>
</dbReference>
<dbReference type="GO" id="GO:0010888">
    <property type="term" value="P:negative regulation of lipid storage"/>
    <property type="evidence" value="ECO:0000315"/>
    <property type="project" value="BHF-UCL"/>
</dbReference>
<dbReference type="GO" id="GO:1903979">
    <property type="term" value="P:negative regulation of microglial cell activation"/>
    <property type="evidence" value="ECO:0000316"/>
    <property type="project" value="ARUK-UCL"/>
</dbReference>
<dbReference type="GO" id="GO:0150079">
    <property type="term" value="P:negative regulation of neuroinflammatory response"/>
    <property type="evidence" value="ECO:0000316"/>
    <property type="project" value="ARUK-UCL"/>
</dbReference>
<dbReference type="GO" id="GO:0090278">
    <property type="term" value="P:negative regulation of peptide hormone secretion"/>
    <property type="evidence" value="ECO:0000315"/>
    <property type="project" value="BHF-UCL"/>
</dbReference>
<dbReference type="GO" id="GO:0014912">
    <property type="term" value="P:negative regulation of smooth muscle cell migration"/>
    <property type="evidence" value="ECO:0000314"/>
    <property type="project" value="BHF-UCL"/>
</dbReference>
<dbReference type="GO" id="GO:0048662">
    <property type="term" value="P:negative regulation of smooth muscle cell proliferation"/>
    <property type="evidence" value="ECO:0000314"/>
    <property type="project" value="BHF-UCL"/>
</dbReference>
<dbReference type="GO" id="GO:0000122">
    <property type="term" value="P:negative regulation of transcription by RNA polymerase II"/>
    <property type="evidence" value="ECO:0000314"/>
    <property type="project" value="BHF-UCL"/>
</dbReference>
<dbReference type="GO" id="GO:0035357">
    <property type="term" value="P:peroxisome proliferator activated receptor signaling pathway"/>
    <property type="evidence" value="ECO:0000314"/>
    <property type="project" value="UniProtKB"/>
</dbReference>
<dbReference type="GO" id="GO:0001890">
    <property type="term" value="P:placenta development"/>
    <property type="evidence" value="ECO:0000315"/>
    <property type="project" value="MGI"/>
</dbReference>
<dbReference type="GO" id="GO:1904179">
    <property type="term" value="P:positive regulation of adipose tissue development"/>
    <property type="evidence" value="ECO:0000315"/>
    <property type="project" value="ARUK-UCL"/>
</dbReference>
<dbReference type="GO" id="GO:0045893">
    <property type="term" value="P:positive regulation of DNA-templated transcription"/>
    <property type="evidence" value="ECO:0000314"/>
    <property type="project" value="UniProtKB"/>
</dbReference>
<dbReference type="GO" id="GO:0045600">
    <property type="term" value="P:positive regulation of fat cell differentiation"/>
    <property type="evidence" value="ECO:0000314"/>
    <property type="project" value="UniProtKB"/>
</dbReference>
<dbReference type="GO" id="GO:0010628">
    <property type="term" value="P:positive regulation of gene expression"/>
    <property type="evidence" value="ECO:0000316"/>
    <property type="project" value="BHF-UCL"/>
</dbReference>
<dbReference type="GO" id="GO:0060391">
    <property type="term" value="P:positive regulation of SMAD protein signal transduction"/>
    <property type="evidence" value="ECO:0000316"/>
    <property type="project" value="BHF-UCL"/>
</dbReference>
<dbReference type="GO" id="GO:0045944">
    <property type="term" value="P:positive regulation of transcription by RNA polymerase II"/>
    <property type="evidence" value="ECO:0000314"/>
    <property type="project" value="MGI"/>
</dbReference>
<dbReference type="GO" id="GO:1900076">
    <property type="term" value="P:regulation of cellular response to insulin stimulus"/>
    <property type="evidence" value="ECO:0000303"/>
    <property type="project" value="ComplexPortal"/>
</dbReference>
<dbReference type="GO" id="GO:0042752">
    <property type="term" value="P:regulation of circadian rhythm"/>
    <property type="evidence" value="ECO:0000315"/>
    <property type="project" value="UniProtKB"/>
</dbReference>
<dbReference type="GO" id="GO:0006355">
    <property type="term" value="P:regulation of DNA-templated transcription"/>
    <property type="evidence" value="ECO:0000315"/>
    <property type="project" value="UniProtKB"/>
</dbReference>
<dbReference type="GO" id="GO:0010468">
    <property type="term" value="P:regulation of gene expression"/>
    <property type="evidence" value="ECO:0000315"/>
    <property type="project" value="MGI"/>
</dbReference>
<dbReference type="GO" id="GO:0006357">
    <property type="term" value="P:regulation of transcription by RNA polymerase II"/>
    <property type="evidence" value="ECO:0000315"/>
    <property type="project" value="GO_Central"/>
</dbReference>
<dbReference type="GO" id="GO:0002021">
    <property type="term" value="P:response to dietary excess"/>
    <property type="evidence" value="ECO:0000314"/>
    <property type="project" value="MGI"/>
</dbReference>
<dbReference type="GO" id="GO:0032094">
    <property type="term" value="P:response to food"/>
    <property type="evidence" value="ECO:0000314"/>
    <property type="project" value="UniProtKB"/>
</dbReference>
<dbReference type="GO" id="GO:0009416">
    <property type="term" value="P:response to light stimulus"/>
    <property type="evidence" value="ECO:0000314"/>
    <property type="project" value="UniProtKB"/>
</dbReference>
<dbReference type="GO" id="GO:0033993">
    <property type="term" value="P:response to lipid"/>
    <property type="evidence" value="ECO:0000314"/>
    <property type="project" value="BHF-UCL"/>
</dbReference>
<dbReference type="GO" id="GO:0048384">
    <property type="term" value="P:retinoic acid receptor signaling pathway"/>
    <property type="evidence" value="ECO:0000314"/>
    <property type="project" value="GO_Central"/>
</dbReference>
<dbReference type="GO" id="GO:0048511">
    <property type="term" value="P:rhythmic process"/>
    <property type="evidence" value="ECO:0007669"/>
    <property type="project" value="UniProtKB-KW"/>
</dbReference>
<dbReference type="GO" id="GO:0050872">
    <property type="term" value="P:white fat cell differentiation"/>
    <property type="evidence" value="ECO:0000314"/>
    <property type="project" value="MGI"/>
</dbReference>
<dbReference type="GO" id="GO:0002246">
    <property type="term" value="P:wound healing involved in inflammatory response"/>
    <property type="evidence" value="ECO:0000314"/>
    <property type="project" value="BHF-UCL"/>
</dbReference>
<dbReference type="CDD" id="cd06965">
    <property type="entry name" value="NR_DBD_Ppar"/>
    <property type="match status" value="1"/>
</dbReference>
<dbReference type="CDD" id="cd06932">
    <property type="entry name" value="NR_LBD_PPAR"/>
    <property type="match status" value="1"/>
</dbReference>
<dbReference type="FunFam" id="1.10.565.10:FF:000017">
    <property type="entry name" value="Peroxisome proliferator-activated receptor gamma"/>
    <property type="match status" value="1"/>
</dbReference>
<dbReference type="FunFam" id="3.30.50.10:FF:000010">
    <property type="entry name" value="Peroxisome proliferator-activated receptor gamma"/>
    <property type="match status" value="1"/>
</dbReference>
<dbReference type="Gene3D" id="3.30.50.10">
    <property type="entry name" value="Erythroid Transcription Factor GATA-1, subunit A"/>
    <property type="match status" value="1"/>
</dbReference>
<dbReference type="Gene3D" id="1.10.565.10">
    <property type="entry name" value="Retinoid X Receptor"/>
    <property type="match status" value="1"/>
</dbReference>
<dbReference type="InterPro" id="IPR003074">
    <property type="entry name" value="1Cnucl_rcpt"/>
</dbReference>
<dbReference type="InterPro" id="IPR035500">
    <property type="entry name" value="NHR-like_dom_sf"/>
</dbReference>
<dbReference type="InterPro" id="IPR000536">
    <property type="entry name" value="Nucl_hrmn_rcpt_lig-bd"/>
</dbReference>
<dbReference type="InterPro" id="IPR050234">
    <property type="entry name" value="Nuclear_hormone_rcpt_NR1"/>
</dbReference>
<dbReference type="InterPro" id="IPR001723">
    <property type="entry name" value="Nuclear_hrmn_rcpt"/>
</dbReference>
<dbReference type="InterPro" id="IPR003077">
    <property type="entry name" value="PPAR-gamma"/>
</dbReference>
<dbReference type="InterPro" id="IPR022590">
    <property type="entry name" value="PPARgamma_N"/>
</dbReference>
<dbReference type="InterPro" id="IPR001628">
    <property type="entry name" value="Znf_hrmn_rcpt"/>
</dbReference>
<dbReference type="InterPro" id="IPR013088">
    <property type="entry name" value="Znf_NHR/GATA"/>
</dbReference>
<dbReference type="PANTHER" id="PTHR24082">
    <property type="entry name" value="NUCLEAR HORMONE RECEPTOR"/>
    <property type="match status" value="1"/>
</dbReference>
<dbReference type="PANTHER" id="PTHR24082:SF488">
    <property type="entry name" value="PEROXISOME PROLIFERATOR-ACTIVATED RECEPTOR GAMMA"/>
    <property type="match status" value="1"/>
</dbReference>
<dbReference type="Pfam" id="PF00104">
    <property type="entry name" value="Hormone_recep"/>
    <property type="match status" value="1"/>
</dbReference>
<dbReference type="Pfam" id="PF12577">
    <property type="entry name" value="PPARgamma_N"/>
    <property type="match status" value="1"/>
</dbReference>
<dbReference type="Pfam" id="PF00105">
    <property type="entry name" value="zf-C4"/>
    <property type="match status" value="1"/>
</dbReference>
<dbReference type="PRINTS" id="PR01288">
    <property type="entry name" value="PROXISOMEPAR"/>
</dbReference>
<dbReference type="PRINTS" id="PR01291">
    <property type="entry name" value="PROXISOMPAGR"/>
</dbReference>
<dbReference type="PRINTS" id="PR00398">
    <property type="entry name" value="STRDHORMONER"/>
</dbReference>
<dbReference type="PRINTS" id="PR00047">
    <property type="entry name" value="STROIDFINGER"/>
</dbReference>
<dbReference type="SMART" id="SM00430">
    <property type="entry name" value="HOLI"/>
    <property type="match status" value="1"/>
</dbReference>
<dbReference type="SMART" id="SM00399">
    <property type="entry name" value="ZnF_C4"/>
    <property type="match status" value="1"/>
</dbReference>
<dbReference type="SUPFAM" id="SSF57716">
    <property type="entry name" value="Glucocorticoid receptor-like (DNA-binding domain)"/>
    <property type="match status" value="1"/>
</dbReference>
<dbReference type="SUPFAM" id="SSF48508">
    <property type="entry name" value="Nuclear receptor ligand-binding domain"/>
    <property type="match status" value="1"/>
</dbReference>
<dbReference type="PROSITE" id="PS51843">
    <property type="entry name" value="NR_LBD"/>
    <property type="match status" value="1"/>
</dbReference>
<dbReference type="PROSITE" id="PS00031">
    <property type="entry name" value="NUCLEAR_REC_DBD_1"/>
    <property type="match status" value="1"/>
</dbReference>
<dbReference type="PROSITE" id="PS51030">
    <property type="entry name" value="NUCLEAR_REC_DBD_2"/>
    <property type="match status" value="1"/>
</dbReference>